<feature type="chain" id="PRO_0000141482" description="4-hydroxy-tetrahydrodipicolinate reductase">
    <location>
        <begin position="1"/>
        <end position="273"/>
    </location>
</feature>
<feature type="active site" description="Proton donor/acceptor" evidence="1">
    <location>
        <position position="159"/>
    </location>
</feature>
<feature type="active site" description="Proton donor" evidence="1">
    <location>
        <position position="163"/>
    </location>
</feature>
<feature type="binding site" evidence="1">
    <location>
        <begin position="12"/>
        <end position="17"/>
    </location>
    <ligand>
        <name>NAD(+)</name>
        <dbReference type="ChEBI" id="CHEBI:57540"/>
    </ligand>
</feature>
<feature type="binding site" evidence="1">
    <location>
        <position position="38"/>
    </location>
    <ligand>
        <name>NAD(+)</name>
        <dbReference type="ChEBI" id="CHEBI:57540"/>
    </ligand>
</feature>
<feature type="binding site" evidence="1">
    <location>
        <position position="39"/>
    </location>
    <ligand>
        <name>NADP(+)</name>
        <dbReference type="ChEBI" id="CHEBI:58349"/>
    </ligand>
</feature>
<feature type="binding site" evidence="1">
    <location>
        <begin position="102"/>
        <end position="104"/>
    </location>
    <ligand>
        <name>NAD(+)</name>
        <dbReference type="ChEBI" id="CHEBI:57540"/>
    </ligand>
</feature>
<feature type="binding site" evidence="1">
    <location>
        <begin position="126"/>
        <end position="129"/>
    </location>
    <ligand>
        <name>NAD(+)</name>
        <dbReference type="ChEBI" id="CHEBI:57540"/>
    </ligand>
</feature>
<feature type="binding site" evidence="1">
    <location>
        <position position="160"/>
    </location>
    <ligand>
        <name>(S)-2,3,4,5-tetrahydrodipicolinate</name>
        <dbReference type="ChEBI" id="CHEBI:16845"/>
    </ligand>
</feature>
<feature type="binding site" evidence="1">
    <location>
        <begin position="169"/>
        <end position="170"/>
    </location>
    <ligand>
        <name>(S)-2,3,4,5-tetrahydrodipicolinate</name>
        <dbReference type="ChEBI" id="CHEBI:16845"/>
    </ligand>
</feature>
<keyword id="KW-0028">Amino-acid biosynthesis</keyword>
<keyword id="KW-0963">Cytoplasm</keyword>
<keyword id="KW-0220">Diaminopimelate biosynthesis</keyword>
<keyword id="KW-0457">Lysine biosynthesis</keyword>
<keyword id="KW-0520">NAD</keyword>
<keyword id="KW-0521">NADP</keyword>
<keyword id="KW-0560">Oxidoreductase</keyword>
<keyword id="KW-1185">Reference proteome</keyword>
<dbReference type="EC" id="1.17.1.8" evidence="1"/>
<dbReference type="EMBL" id="AE006468">
    <property type="protein sequence ID" value="AAL19028.1"/>
    <property type="molecule type" value="Genomic_DNA"/>
</dbReference>
<dbReference type="RefSeq" id="NP_459069.1">
    <property type="nucleotide sequence ID" value="NC_003197.2"/>
</dbReference>
<dbReference type="RefSeq" id="WP_000544031.1">
    <property type="nucleotide sequence ID" value="NC_003197.2"/>
</dbReference>
<dbReference type="SMR" id="Q8ZRX8"/>
<dbReference type="STRING" id="99287.STM0064"/>
<dbReference type="PaxDb" id="99287-STM0064"/>
<dbReference type="GeneID" id="1251582"/>
<dbReference type="KEGG" id="stm:STM0064"/>
<dbReference type="PATRIC" id="fig|99287.12.peg.66"/>
<dbReference type="HOGENOM" id="CLU_047479_2_1_6"/>
<dbReference type="OMA" id="HHPNKAD"/>
<dbReference type="PhylomeDB" id="Q8ZRX8"/>
<dbReference type="BioCyc" id="SENT99287:STM0064-MONOMER"/>
<dbReference type="UniPathway" id="UPA00034">
    <property type="reaction ID" value="UER00018"/>
</dbReference>
<dbReference type="Proteomes" id="UP000001014">
    <property type="component" value="Chromosome"/>
</dbReference>
<dbReference type="GO" id="GO:0005829">
    <property type="term" value="C:cytosol"/>
    <property type="evidence" value="ECO:0000318"/>
    <property type="project" value="GO_Central"/>
</dbReference>
<dbReference type="GO" id="GO:0008839">
    <property type="term" value="F:4-hydroxy-tetrahydrodipicolinate reductase"/>
    <property type="evidence" value="ECO:0000318"/>
    <property type="project" value="GO_Central"/>
</dbReference>
<dbReference type="GO" id="GO:0051287">
    <property type="term" value="F:NAD binding"/>
    <property type="evidence" value="ECO:0007669"/>
    <property type="project" value="UniProtKB-UniRule"/>
</dbReference>
<dbReference type="GO" id="GO:0050661">
    <property type="term" value="F:NADP binding"/>
    <property type="evidence" value="ECO:0007669"/>
    <property type="project" value="UniProtKB-UniRule"/>
</dbReference>
<dbReference type="GO" id="GO:0016726">
    <property type="term" value="F:oxidoreductase activity, acting on CH or CH2 groups, NAD or NADP as acceptor"/>
    <property type="evidence" value="ECO:0007669"/>
    <property type="project" value="UniProtKB-UniRule"/>
</dbReference>
<dbReference type="GO" id="GO:0019877">
    <property type="term" value="P:diaminopimelate biosynthetic process"/>
    <property type="evidence" value="ECO:0000318"/>
    <property type="project" value="GO_Central"/>
</dbReference>
<dbReference type="GO" id="GO:0009089">
    <property type="term" value="P:lysine biosynthetic process via diaminopimelate"/>
    <property type="evidence" value="ECO:0007669"/>
    <property type="project" value="UniProtKB-UniRule"/>
</dbReference>
<dbReference type="CDD" id="cd02274">
    <property type="entry name" value="DHDPR_N"/>
    <property type="match status" value="1"/>
</dbReference>
<dbReference type="FunFam" id="3.30.360.10:FF:000004">
    <property type="entry name" value="4-hydroxy-tetrahydrodipicolinate reductase"/>
    <property type="match status" value="1"/>
</dbReference>
<dbReference type="FunFam" id="3.40.50.720:FF:000048">
    <property type="entry name" value="4-hydroxy-tetrahydrodipicolinate reductase"/>
    <property type="match status" value="1"/>
</dbReference>
<dbReference type="Gene3D" id="3.30.360.10">
    <property type="entry name" value="Dihydrodipicolinate Reductase, domain 2"/>
    <property type="match status" value="1"/>
</dbReference>
<dbReference type="Gene3D" id="3.40.50.720">
    <property type="entry name" value="NAD(P)-binding Rossmann-like Domain"/>
    <property type="match status" value="1"/>
</dbReference>
<dbReference type="HAMAP" id="MF_00102">
    <property type="entry name" value="DapB"/>
    <property type="match status" value="1"/>
</dbReference>
<dbReference type="InterPro" id="IPR022663">
    <property type="entry name" value="DapB_C"/>
</dbReference>
<dbReference type="InterPro" id="IPR000846">
    <property type="entry name" value="DapB_N"/>
</dbReference>
<dbReference type="InterPro" id="IPR022664">
    <property type="entry name" value="DapB_N_CS"/>
</dbReference>
<dbReference type="InterPro" id="IPR023940">
    <property type="entry name" value="DHDPR_bac"/>
</dbReference>
<dbReference type="InterPro" id="IPR036291">
    <property type="entry name" value="NAD(P)-bd_dom_sf"/>
</dbReference>
<dbReference type="NCBIfam" id="TIGR00036">
    <property type="entry name" value="dapB"/>
    <property type="match status" value="1"/>
</dbReference>
<dbReference type="PANTHER" id="PTHR20836:SF0">
    <property type="entry name" value="4-HYDROXY-TETRAHYDRODIPICOLINATE REDUCTASE 1, CHLOROPLASTIC-RELATED"/>
    <property type="match status" value="1"/>
</dbReference>
<dbReference type="PANTHER" id="PTHR20836">
    <property type="entry name" value="DIHYDRODIPICOLINATE REDUCTASE"/>
    <property type="match status" value="1"/>
</dbReference>
<dbReference type="Pfam" id="PF05173">
    <property type="entry name" value="DapB_C"/>
    <property type="match status" value="1"/>
</dbReference>
<dbReference type="Pfam" id="PF01113">
    <property type="entry name" value="DapB_N"/>
    <property type="match status" value="1"/>
</dbReference>
<dbReference type="PIRSF" id="PIRSF000161">
    <property type="entry name" value="DHPR"/>
    <property type="match status" value="1"/>
</dbReference>
<dbReference type="SUPFAM" id="SSF55347">
    <property type="entry name" value="Glyceraldehyde-3-phosphate dehydrogenase-like, C-terminal domain"/>
    <property type="match status" value="1"/>
</dbReference>
<dbReference type="SUPFAM" id="SSF51735">
    <property type="entry name" value="NAD(P)-binding Rossmann-fold domains"/>
    <property type="match status" value="1"/>
</dbReference>
<dbReference type="PROSITE" id="PS01298">
    <property type="entry name" value="DAPB"/>
    <property type="match status" value="1"/>
</dbReference>
<gene>
    <name evidence="1" type="primary">dapB</name>
    <name type="ordered locus">STM0064</name>
</gene>
<comment type="function">
    <text evidence="1">Catalyzes the conversion of 4-hydroxy-tetrahydrodipicolinate (HTPA) to tetrahydrodipicolinate.</text>
</comment>
<comment type="catalytic activity">
    <reaction evidence="1">
        <text>(S)-2,3,4,5-tetrahydrodipicolinate + NAD(+) + H2O = (2S,4S)-4-hydroxy-2,3,4,5-tetrahydrodipicolinate + NADH + H(+)</text>
        <dbReference type="Rhea" id="RHEA:35323"/>
        <dbReference type="ChEBI" id="CHEBI:15377"/>
        <dbReference type="ChEBI" id="CHEBI:15378"/>
        <dbReference type="ChEBI" id="CHEBI:16845"/>
        <dbReference type="ChEBI" id="CHEBI:57540"/>
        <dbReference type="ChEBI" id="CHEBI:57945"/>
        <dbReference type="ChEBI" id="CHEBI:67139"/>
        <dbReference type="EC" id="1.17.1.8"/>
    </reaction>
</comment>
<comment type="catalytic activity">
    <reaction evidence="1">
        <text>(S)-2,3,4,5-tetrahydrodipicolinate + NADP(+) + H2O = (2S,4S)-4-hydroxy-2,3,4,5-tetrahydrodipicolinate + NADPH + H(+)</text>
        <dbReference type="Rhea" id="RHEA:35331"/>
        <dbReference type="ChEBI" id="CHEBI:15377"/>
        <dbReference type="ChEBI" id="CHEBI:15378"/>
        <dbReference type="ChEBI" id="CHEBI:16845"/>
        <dbReference type="ChEBI" id="CHEBI:57783"/>
        <dbReference type="ChEBI" id="CHEBI:58349"/>
        <dbReference type="ChEBI" id="CHEBI:67139"/>
        <dbReference type="EC" id="1.17.1.8"/>
    </reaction>
</comment>
<comment type="pathway">
    <text evidence="1">Amino-acid biosynthesis; L-lysine biosynthesis via DAP pathway; (S)-tetrahydrodipicolinate from L-aspartate: step 4/4.</text>
</comment>
<comment type="subunit">
    <text evidence="1">Homotetramer.</text>
</comment>
<comment type="subcellular location">
    <subcellularLocation>
        <location evidence="1">Cytoplasm</location>
    </subcellularLocation>
</comment>
<comment type="similarity">
    <text evidence="1">Belongs to the DapB family.</text>
</comment>
<comment type="caution">
    <text evidence="2">Was originally thought to be a dihydrodipicolinate reductase (DHDPR), catalyzing the conversion of dihydrodipicolinate to tetrahydrodipicolinate. However, it was shown in E.coli that the substrate of the enzymatic reaction is not dihydrodipicolinate (DHDP) but in fact (2S,4S)-4-hydroxy-2,3,4,5-tetrahydrodipicolinic acid (HTPA), the product released by the DapA-catalyzed reaction.</text>
</comment>
<sequence>MHEAQIRVAIAGAGGRMGRQLIQAAMAMEGVQLGAALEREGSSLLGSDAGELAGAGKSGVIVQSSLEAVKDDFDVFIDFTRPEGTLTHLAFCRQHGKGMVIGTTGFDDAGKQAIREASQEIAIVFAANFSVGVNVMLKLLEKAAKVMGDYSDIEIIEAHHRHKVDAPSGTALAMGEAIAGALDKNLKDCAVYSREGYTGERVAGTIGFATVRAGDIVGEHTAMFADIGERVEITHKASSRMTFANGALRSALWLKTKKNGLFDMRDVLGLDVL</sequence>
<name>DAPB_SALTY</name>
<reference key="1">
    <citation type="journal article" date="2001" name="Nature">
        <title>Complete genome sequence of Salmonella enterica serovar Typhimurium LT2.</title>
        <authorList>
            <person name="McClelland M."/>
            <person name="Sanderson K.E."/>
            <person name="Spieth J."/>
            <person name="Clifton S.W."/>
            <person name="Latreille P."/>
            <person name="Courtney L."/>
            <person name="Porwollik S."/>
            <person name="Ali J."/>
            <person name="Dante M."/>
            <person name="Du F."/>
            <person name="Hou S."/>
            <person name="Layman D."/>
            <person name="Leonard S."/>
            <person name="Nguyen C."/>
            <person name="Scott K."/>
            <person name="Holmes A."/>
            <person name="Grewal N."/>
            <person name="Mulvaney E."/>
            <person name="Ryan E."/>
            <person name="Sun H."/>
            <person name="Florea L."/>
            <person name="Miller W."/>
            <person name="Stoneking T."/>
            <person name="Nhan M."/>
            <person name="Waterston R."/>
            <person name="Wilson R.K."/>
        </authorList>
    </citation>
    <scope>NUCLEOTIDE SEQUENCE [LARGE SCALE GENOMIC DNA]</scope>
    <source>
        <strain>LT2 / SGSC1412 / ATCC 700720</strain>
    </source>
</reference>
<evidence type="ECO:0000255" key="1">
    <source>
        <dbReference type="HAMAP-Rule" id="MF_00102"/>
    </source>
</evidence>
<evidence type="ECO:0000305" key="2"/>
<protein>
    <recommendedName>
        <fullName evidence="1">4-hydroxy-tetrahydrodipicolinate reductase</fullName>
        <shortName evidence="1">HTPA reductase</shortName>
        <ecNumber evidence="1">1.17.1.8</ecNumber>
    </recommendedName>
</protein>
<accession>Q8ZRX8</accession>
<proteinExistence type="inferred from homology"/>
<organism>
    <name type="scientific">Salmonella typhimurium (strain LT2 / SGSC1412 / ATCC 700720)</name>
    <dbReference type="NCBI Taxonomy" id="99287"/>
    <lineage>
        <taxon>Bacteria</taxon>
        <taxon>Pseudomonadati</taxon>
        <taxon>Pseudomonadota</taxon>
        <taxon>Gammaproteobacteria</taxon>
        <taxon>Enterobacterales</taxon>
        <taxon>Enterobacteriaceae</taxon>
        <taxon>Salmonella</taxon>
    </lineage>
</organism>